<reference key="1">
    <citation type="journal article" date="2011" name="MBio">
        <title>Novel metabolic attributes of the genus Cyanothece, comprising a group of unicellular nitrogen-fixing Cyanobacteria.</title>
        <authorList>
            <person name="Bandyopadhyay A."/>
            <person name="Elvitigala T."/>
            <person name="Welsh E."/>
            <person name="Stockel J."/>
            <person name="Liberton M."/>
            <person name="Min H."/>
            <person name="Sherman L.A."/>
            <person name="Pakrasi H.B."/>
        </authorList>
    </citation>
    <scope>NUCLEOTIDE SEQUENCE [LARGE SCALE GENOMIC DNA]</scope>
    <source>
        <strain>PCC 7425 / ATCC 29141</strain>
    </source>
</reference>
<feature type="chain" id="PRO_1000195246" description="Crossover junction endodeoxyribonuclease RuvC">
    <location>
        <begin position="1"/>
        <end position="157"/>
    </location>
</feature>
<feature type="active site" evidence="1">
    <location>
        <position position="9"/>
    </location>
</feature>
<feature type="active site" evidence="1">
    <location>
        <position position="70"/>
    </location>
</feature>
<feature type="active site" evidence="1">
    <location>
        <position position="142"/>
    </location>
</feature>
<feature type="binding site" evidence="1">
    <location>
        <position position="9"/>
    </location>
    <ligand>
        <name>Mg(2+)</name>
        <dbReference type="ChEBI" id="CHEBI:18420"/>
        <label>1</label>
    </ligand>
</feature>
<feature type="binding site" evidence="1">
    <location>
        <position position="70"/>
    </location>
    <ligand>
        <name>Mg(2+)</name>
        <dbReference type="ChEBI" id="CHEBI:18420"/>
        <label>2</label>
    </ligand>
</feature>
<feature type="binding site" evidence="1">
    <location>
        <position position="142"/>
    </location>
    <ligand>
        <name>Mg(2+)</name>
        <dbReference type="ChEBI" id="CHEBI:18420"/>
        <label>1</label>
    </ligand>
</feature>
<name>RUVC_CYAP4</name>
<protein>
    <recommendedName>
        <fullName evidence="1">Crossover junction endodeoxyribonuclease RuvC</fullName>
        <ecNumber evidence="1">3.1.21.10</ecNumber>
    </recommendedName>
    <alternativeName>
        <fullName evidence="1">Holliday junction nuclease RuvC</fullName>
    </alternativeName>
    <alternativeName>
        <fullName evidence="1">Holliday junction resolvase RuvC</fullName>
    </alternativeName>
</protein>
<accession>B8HX01</accession>
<dbReference type="EC" id="3.1.21.10" evidence="1"/>
<dbReference type="EMBL" id="CP001344">
    <property type="protein sequence ID" value="ACL43304.1"/>
    <property type="molecule type" value="Genomic_DNA"/>
</dbReference>
<dbReference type="SMR" id="B8HX01"/>
<dbReference type="STRING" id="395961.Cyan7425_0918"/>
<dbReference type="KEGG" id="cyn:Cyan7425_0918"/>
<dbReference type="eggNOG" id="COG0817">
    <property type="taxonomic scope" value="Bacteria"/>
</dbReference>
<dbReference type="HOGENOM" id="CLU_091257_3_1_3"/>
<dbReference type="OrthoDB" id="9805499at2"/>
<dbReference type="GO" id="GO:0005737">
    <property type="term" value="C:cytoplasm"/>
    <property type="evidence" value="ECO:0007669"/>
    <property type="project" value="UniProtKB-SubCell"/>
</dbReference>
<dbReference type="GO" id="GO:0048476">
    <property type="term" value="C:Holliday junction resolvase complex"/>
    <property type="evidence" value="ECO:0007669"/>
    <property type="project" value="UniProtKB-UniRule"/>
</dbReference>
<dbReference type="GO" id="GO:0008821">
    <property type="term" value="F:crossover junction DNA endonuclease activity"/>
    <property type="evidence" value="ECO:0007669"/>
    <property type="project" value="UniProtKB-UniRule"/>
</dbReference>
<dbReference type="GO" id="GO:0003677">
    <property type="term" value="F:DNA binding"/>
    <property type="evidence" value="ECO:0007669"/>
    <property type="project" value="UniProtKB-KW"/>
</dbReference>
<dbReference type="GO" id="GO:0000287">
    <property type="term" value="F:magnesium ion binding"/>
    <property type="evidence" value="ECO:0007669"/>
    <property type="project" value="UniProtKB-UniRule"/>
</dbReference>
<dbReference type="GO" id="GO:0006310">
    <property type="term" value="P:DNA recombination"/>
    <property type="evidence" value="ECO:0007669"/>
    <property type="project" value="UniProtKB-UniRule"/>
</dbReference>
<dbReference type="GO" id="GO:0006281">
    <property type="term" value="P:DNA repair"/>
    <property type="evidence" value="ECO:0007669"/>
    <property type="project" value="UniProtKB-UniRule"/>
</dbReference>
<dbReference type="CDD" id="cd16962">
    <property type="entry name" value="RuvC"/>
    <property type="match status" value="1"/>
</dbReference>
<dbReference type="FunFam" id="3.30.420.10:FF:000002">
    <property type="entry name" value="Crossover junction endodeoxyribonuclease RuvC"/>
    <property type="match status" value="1"/>
</dbReference>
<dbReference type="Gene3D" id="3.30.420.10">
    <property type="entry name" value="Ribonuclease H-like superfamily/Ribonuclease H"/>
    <property type="match status" value="1"/>
</dbReference>
<dbReference type="HAMAP" id="MF_00034">
    <property type="entry name" value="RuvC"/>
    <property type="match status" value="1"/>
</dbReference>
<dbReference type="InterPro" id="IPR012337">
    <property type="entry name" value="RNaseH-like_sf"/>
</dbReference>
<dbReference type="InterPro" id="IPR036397">
    <property type="entry name" value="RNaseH_sf"/>
</dbReference>
<dbReference type="InterPro" id="IPR020563">
    <property type="entry name" value="X-over_junc_endoDNase_Mg_BS"/>
</dbReference>
<dbReference type="InterPro" id="IPR002176">
    <property type="entry name" value="X-over_junc_endoDNase_RuvC"/>
</dbReference>
<dbReference type="NCBIfam" id="NF000711">
    <property type="entry name" value="PRK00039.2-1"/>
    <property type="match status" value="1"/>
</dbReference>
<dbReference type="NCBIfam" id="TIGR00228">
    <property type="entry name" value="ruvC"/>
    <property type="match status" value="1"/>
</dbReference>
<dbReference type="PANTHER" id="PTHR30194">
    <property type="entry name" value="CROSSOVER JUNCTION ENDODEOXYRIBONUCLEASE RUVC"/>
    <property type="match status" value="1"/>
</dbReference>
<dbReference type="PANTHER" id="PTHR30194:SF3">
    <property type="entry name" value="CROSSOVER JUNCTION ENDODEOXYRIBONUCLEASE RUVC"/>
    <property type="match status" value="1"/>
</dbReference>
<dbReference type="Pfam" id="PF02075">
    <property type="entry name" value="RuvC"/>
    <property type="match status" value="1"/>
</dbReference>
<dbReference type="PRINTS" id="PR00696">
    <property type="entry name" value="RSOLVASERUVC"/>
</dbReference>
<dbReference type="SUPFAM" id="SSF53098">
    <property type="entry name" value="Ribonuclease H-like"/>
    <property type="match status" value="1"/>
</dbReference>
<dbReference type="PROSITE" id="PS01321">
    <property type="entry name" value="RUVC"/>
    <property type="match status" value="1"/>
</dbReference>
<organism>
    <name type="scientific">Cyanothece sp. (strain PCC 7425 / ATCC 29141)</name>
    <dbReference type="NCBI Taxonomy" id="395961"/>
    <lineage>
        <taxon>Bacteria</taxon>
        <taxon>Bacillati</taxon>
        <taxon>Cyanobacteriota</taxon>
        <taxon>Cyanophyceae</taxon>
        <taxon>Gomontiellales</taxon>
        <taxon>Cyanothecaceae</taxon>
        <taxon>Cyanothece</taxon>
    </lineage>
</organism>
<gene>
    <name evidence="1" type="primary">ruvC</name>
    <name type="ordered locus">Cyan7425_0918</name>
</gene>
<comment type="function">
    <text evidence="1">The RuvA-RuvB-RuvC complex processes Holliday junction (HJ) DNA during genetic recombination and DNA repair. Endonuclease that resolves HJ intermediates. Cleaves cruciform DNA by making single-stranded nicks across the HJ at symmetrical positions within the homologous arms, yielding a 5'-phosphate and a 3'-hydroxyl group; requires a central core of homology in the junction. The consensus cleavage sequence is 5'-(A/T)TT(C/G)-3'. Cleavage occurs on the 3'-side of the TT dinucleotide at the point of strand exchange. HJ branch migration catalyzed by RuvA-RuvB allows RuvC to scan DNA until it finds its consensus sequence, where it cleaves and resolves the cruciform DNA.</text>
</comment>
<comment type="catalytic activity">
    <reaction evidence="1">
        <text>Endonucleolytic cleavage at a junction such as a reciprocal single-stranded crossover between two homologous DNA duplexes (Holliday junction).</text>
        <dbReference type="EC" id="3.1.21.10"/>
    </reaction>
</comment>
<comment type="cofactor">
    <cofactor evidence="1">
        <name>Mg(2+)</name>
        <dbReference type="ChEBI" id="CHEBI:18420"/>
    </cofactor>
    <text evidence="1">Binds 2 Mg(2+) ion per subunit.</text>
</comment>
<comment type="subunit">
    <text evidence="1">Homodimer which binds Holliday junction (HJ) DNA. The HJ becomes 2-fold symmetrical on binding to RuvC with unstacked arms; it has a different conformation from HJ DNA in complex with RuvA. In the full resolvosome a probable DNA-RuvA(4)-RuvB(12)-RuvC(2) complex forms which resolves the HJ.</text>
</comment>
<comment type="subcellular location">
    <subcellularLocation>
        <location evidence="1">Cytoplasm</location>
    </subcellularLocation>
</comment>
<comment type="similarity">
    <text evidence="1">Belongs to the RuvC family.</text>
</comment>
<sequence>MVKRILGLDPGLATLGFGSITVQPDESLQVLDFGVIKTAAGEEIGSRLLTIYEDLHTLLQHFQPDLVAIEKFFFYRMSNTILVAQARGVILLVLAQHHLALMEFTPAQVKQTLTGHGNADKQEVQLAVQRELKLESLPRPDDAADALALALTASFQR</sequence>
<proteinExistence type="inferred from homology"/>
<evidence type="ECO:0000255" key="1">
    <source>
        <dbReference type="HAMAP-Rule" id="MF_00034"/>
    </source>
</evidence>
<keyword id="KW-0963">Cytoplasm</keyword>
<keyword id="KW-0227">DNA damage</keyword>
<keyword id="KW-0233">DNA recombination</keyword>
<keyword id="KW-0234">DNA repair</keyword>
<keyword id="KW-0238">DNA-binding</keyword>
<keyword id="KW-0255">Endonuclease</keyword>
<keyword id="KW-0378">Hydrolase</keyword>
<keyword id="KW-0460">Magnesium</keyword>
<keyword id="KW-0479">Metal-binding</keyword>
<keyword id="KW-0540">Nuclease</keyword>